<reference key="1">
    <citation type="journal article" date="2008" name="BMC Genomics">
        <title>The genome sequence of the fish pathogen Aliivibrio salmonicida strain LFI1238 shows extensive evidence of gene decay.</title>
        <authorList>
            <person name="Hjerde E."/>
            <person name="Lorentzen M.S."/>
            <person name="Holden M.T."/>
            <person name="Seeger K."/>
            <person name="Paulsen S."/>
            <person name="Bason N."/>
            <person name="Churcher C."/>
            <person name="Harris D."/>
            <person name="Norbertczak H."/>
            <person name="Quail M.A."/>
            <person name="Sanders S."/>
            <person name="Thurston S."/>
            <person name="Parkhill J."/>
            <person name="Willassen N.P."/>
            <person name="Thomson N.R."/>
        </authorList>
    </citation>
    <scope>NUCLEOTIDE SEQUENCE [LARGE SCALE GENOMIC DNA]</scope>
    <source>
        <strain>LFI1238</strain>
    </source>
</reference>
<proteinExistence type="inferred from homology"/>
<sequence>MSDNGFLFRFKDGQTYMDTWPERKELAPMFPEQRVIKATKFAVKVMPAVAVISVLTQMVFNNSAALPQSIIIALFAISMPLQGFWWLGNRANTKLPPALVNWYRELYQKIIESGAALEPLKQRPRYKDLANILNKAFKQLDKTALERWF</sequence>
<name>Y2111_ALISL</name>
<keyword id="KW-0997">Cell inner membrane</keyword>
<keyword id="KW-1003">Cell membrane</keyword>
<keyword id="KW-0472">Membrane</keyword>
<keyword id="KW-0812">Transmembrane</keyword>
<keyword id="KW-1133">Transmembrane helix</keyword>
<organism>
    <name type="scientific">Aliivibrio salmonicida (strain LFI1238)</name>
    <name type="common">Vibrio salmonicida (strain LFI1238)</name>
    <dbReference type="NCBI Taxonomy" id="316275"/>
    <lineage>
        <taxon>Bacteria</taxon>
        <taxon>Pseudomonadati</taxon>
        <taxon>Pseudomonadota</taxon>
        <taxon>Gammaproteobacteria</taxon>
        <taxon>Vibrionales</taxon>
        <taxon>Vibrionaceae</taxon>
        <taxon>Aliivibrio</taxon>
    </lineage>
</organism>
<protein>
    <recommendedName>
        <fullName evidence="1">UPF0208 membrane protein VSAL_I2111</fullName>
    </recommendedName>
</protein>
<feature type="chain" id="PRO_1000136983" description="UPF0208 membrane protein VSAL_I2111">
    <location>
        <begin position="1"/>
        <end position="149"/>
    </location>
</feature>
<feature type="transmembrane region" description="Helical" evidence="1">
    <location>
        <begin position="41"/>
        <end position="61"/>
    </location>
</feature>
<feature type="transmembrane region" description="Helical" evidence="1">
    <location>
        <begin position="69"/>
        <end position="89"/>
    </location>
</feature>
<accession>B6EI58</accession>
<evidence type="ECO:0000255" key="1">
    <source>
        <dbReference type="HAMAP-Rule" id="MF_01101"/>
    </source>
</evidence>
<comment type="subcellular location">
    <subcellularLocation>
        <location evidence="1">Cell inner membrane</location>
        <topology evidence="1">Multi-pass membrane protein</topology>
    </subcellularLocation>
</comment>
<comment type="similarity">
    <text evidence="1">Belongs to the UPF0208 family.</text>
</comment>
<dbReference type="EMBL" id="FM178379">
    <property type="protein sequence ID" value="CAQ79796.1"/>
    <property type="molecule type" value="Genomic_DNA"/>
</dbReference>
<dbReference type="KEGG" id="vsa:VSAL_I2111"/>
<dbReference type="eggNOG" id="COG3092">
    <property type="taxonomic scope" value="Bacteria"/>
</dbReference>
<dbReference type="HOGENOM" id="CLU_128746_0_0_6"/>
<dbReference type="Proteomes" id="UP000001730">
    <property type="component" value="Chromosome 1"/>
</dbReference>
<dbReference type="GO" id="GO:0005886">
    <property type="term" value="C:plasma membrane"/>
    <property type="evidence" value="ECO:0007669"/>
    <property type="project" value="UniProtKB-SubCell"/>
</dbReference>
<dbReference type="HAMAP" id="MF_01101">
    <property type="entry name" value="UPF0208"/>
    <property type="match status" value="1"/>
</dbReference>
<dbReference type="InterPro" id="IPR007334">
    <property type="entry name" value="UPF0208"/>
</dbReference>
<dbReference type="NCBIfam" id="NF002493">
    <property type="entry name" value="PRK01816.1"/>
    <property type="match status" value="1"/>
</dbReference>
<dbReference type="Pfam" id="PF04217">
    <property type="entry name" value="DUF412"/>
    <property type="match status" value="1"/>
</dbReference>
<gene>
    <name type="ordered locus">VSAL_I2111</name>
</gene>